<name>ELP6_HUMAN</name>
<comment type="function">
    <text evidence="1 3 6">Component of the elongator complex which is required for multiple tRNA modifications, including mcm5U (5-methoxycarbonylmethyl uridine), mcm5s2U (5-methoxycarbonylmethyl-2-thiouridine), and ncm5U (5-carbamoylmethyl uridine) (PubMed:29332244). The elongator complex catalyzes formation of carboxymethyluridine in the wobble base at position 34 in tRNAs (PubMed:22854966, PubMed:29332244). Involved in cell migration (By similarity).</text>
</comment>
<comment type="pathway">
    <text evidence="6">tRNA modification; 5-methoxycarbonylmethyl-2-thiouridine-tRNA biosynthesis.</text>
</comment>
<comment type="subunit">
    <text evidence="3">Component of the elongator complex which consists of ELP1, ELP2, ELP3, ELP4, ELP5 and ELP6.</text>
</comment>
<comment type="interaction">
    <interactant intactId="EBI-2932659">
        <id>Q0PNE2</id>
    </interactant>
    <interactant intactId="EBI-946189">
        <id>Q8TE02</id>
        <label>ELP5</label>
    </interactant>
    <organismsDiffer>false</organismsDiffer>
    <experiments>4</experiments>
</comment>
<comment type="subcellular location">
    <subcellularLocation>
        <location evidence="2">Cytoplasm</location>
    </subcellularLocation>
    <subcellularLocation>
        <location evidence="2">Nucleus</location>
    </subcellularLocation>
    <text evidence="2">Concentrates in the nucleus upon insulin stimulation.</text>
</comment>
<comment type="alternative products">
    <event type="alternative splicing"/>
    <isoform>
        <id>Q0PNE2-1</id>
        <name>1</name>
        <sequence type="displayed"/>
    </isoform>
    <isoform>
        <id>Q0PNE2-2</id>
        <name>2</name>
        <sequence type="described" ref="VSP_022721 VSP_022722"/>
    </isoform>
</comment>
<comment type="similarity">
    <text evidence="7">Belongs to the ELP6 family.</text>
</comment>
<comment type="caution">
    <text evidence="8">The elongator complex was originally thought to play a role in transcription elongation. However, it is no longer thought to play a direct role in this process and its primary function is thought to be in tRNA modification.</text>
</comment>
<comment type="sequence caution" evidence="7">
    <conflict type="frameshift">
        <sequence resource="EMBL-CDS" id="AAH00623"/>
    </conflict>
</comment>
<comment type="sequence caution" evidence="7">
    <conflict type="frameshift">
        <sequence resource="EMBL-CDS" id="AAH14204"/>
    </conflict>
</comment>
<gene>
    <name evidence="5 9" type="primary">ELP6</name>
    <name type="synonym">ATP1</name>
    <name type="synonym">C3orf75</name>
    <name type="synonym">TMEM103</name>
</gene>
<dbReference type="EMBL" id="DQ787088">
    <property type="protein sequence ID" value="ABG79574.1"/>
    <property type="molecule type" value="mRNA"/>
</dbReference>
<dbReference type="EMBL" id="AK000218">
    <property type="protein sequence ID" value="BAA91017.1"/>
    <property type="molecule type" value="mRNA"/>
</dbReference>
<dbReference type="EMBL" id="BC000623">
    <property type="protein sequence ID" value="AAH00623.1"/>
    <property type="status" value="ALT_FRAME"/>
    <property type="molecule type" value="mRNA"/>
</dbReference>
<dbReference type="EMBL" id="BC014204">
    <property type="protein sequence ID" value="AAH14204.1"/>
    <property type="status" value="ALT_FRAME"/>
    <property type="molecule type" value="mRNA"/>
</dbReference>
<dbReference type="CCDS" id="CCDS43082.1">
    <molecule id="Q0PNE2-1"/>
</dbReference>
<dbReference type="RefSeq" id="NP_001026873.2">
    <molecule id="Q0PNE2-1"/>
    <property type="nucleotide sequence ID" value="NM_001031703.3"/>
</dbReference>
<dbReference type="SMR" id="Q0PNE2"/>
<dbReference type="BioGRID" id="120209">
    <property type="interactions" value="51"/>
</dbReference>
<dbReference type="ComplexPortal" id="CPX-1949">
    <property type="entry name" value="Elongator holoenzyme complex"/>
</dbReference>
<dbReference type="CORUM" id="Q0PNE2"/>
<dbReference type="FunCoup" id="Q0PNE2">
    <property type="interactions" value="1758"/>
</dbReference>
<dbReference type="IntAct" id="Q0PNE2">
    <property type="interactions" value="14"/>
</dbReference>
<dbReference type="STRING" id="9606.ENSP00000296149"/>
<dbReference type="iPTMnet" id="Q0PNE2"/>
<dbReference type="PhosphoSitePlus" id="Q0PNE2"/>
<dbReference type="BioMuta" id="ELP6"/>
<dbReference type="DMDM" id="121940398"/>
<dbReference type="jPOST" id="Q0PNE2"/>
<dbReference type="MassIVE" id="Q0PNE2"/>
<dbReference type="PaxDb" id="9606-ENSP00000296149"/>
<dbReference type="PeptideAtlas" id="Q0PNE2"/>
<dbReference type="ProteomicsDB" id="58781">
    <molecule id="Q0PNE2-1"/>
</dbReference>
<dbReference type="ProteomicsDB" id="58782">
    <molecule id="Q0PNE2-2"/>
</dbReference>
<dbReference type="Pumba" id="Q0PNE2"/>
<dbReference type="Antibodypedia" id="48948">
    <property type="antibodies" value="85 antibodies from 13 providers"/>
</dbReference>
<dbReference type="DNASU" id="54859"/>
<dbReference type="Ensembl" id="ENST00000296149.9">
    <molecule id="Q0PNE2-1"/>
    <property type="protein sequence ID" value="ENSP00000296149.4"/>
    <property type="gene ID" value="ENSG00000163832.16"/>
</dbReference>
<dbReference type="GeneID" id="54859"/>
<dbReference type="KEGG" id="hsa:54859"/>
<dbReference type="MANE-Select" id="ENST00000296149.9">
    <property type="protein sequence ID" value="ENSP00000296149.4"/>
    <property type="RefSeq nucleotide sequence ID" value="NM_001031703.3"/>
    <property type="RefSeq protein sequence ID" value="NP_001026873.2"/>
</dbReference>
<dbReference type="UCSC" id="uc003crk.4">
    <molecule id="Q0PNE2-1"/>
    <property type="organism name" value="human"/>
</dbReference>
<dbReference type="AGR" id="HGNC:25976"/>
<dbReference type="CTD" id="54859"/>
<dbReference type="DisGeNET" id="54859"/>
<dbReference type="GeneCards" id="ELP6"/>
<dbReference type="HGNC" id="HGNC:25976">
    <property type="gene designation" value="ELP6"/>
</dbReference>
<dbReference type="HPA" id="ENSG00000163832">
    <property type="expression patterns" value="Low tissue specificity"/>
</dbReference>
<dbReference type="MIM" id="615020">
    <property type="type" value="gene"/>
</dbReference>
<dbReference type="neXtProt" id="NX_Q0PNE2"/>
<dbReference type="OpenTargets" id="ENSG00000163832"/>
<dbReference type="PharmGKB" id="PA164717260"/>
<dbReference type="VEuPathDB" id="HostDB:ENSG00000163832"/>
<dbReference type="eggNOG" id="KOG4723">
    <property type="taxonomic scope" value="Eukaryota"/>
</dbReference>
<dbReference type="GeneTree" id="ENSGT00390000011734"/>
<dbReference type="HOGENOM" id="CLU_092581_2_0_1"/>
<dbReference type="InParanoid" id="Q0PNE2"/>
<dbReference type="OMA" id="MFTELNS"/>
<dbReference type="OrthoDB" id="9995306at2759"/>
<dbReference type="PAN-GO" id="Q0PNE2">
    <property type="GO annotations" value="1 GO annotation based on evolutionary models"/>
</dbReference>
<dbReference type="PhylomeDB" id="Q0PNE2"/>
<dbReference type="TreeFam" id="TF331346"/>
<dbReference type="BioCyc" id="MetaCyc:ENSG00000163832-MONOMER"/>
<dbReference type="PathwayCommons" id="Q0PNE2"/>
<dbReference type="Reactome" id="R-HSA-3214847">
    <property type="pathway name" value="HATs acetylate histones"/>
</dbReference>
<dbReference type="SignaLink" id="Q0PNE2"/>
<dbReference type="SIGNOR" id="Q0PNE2"/>
<dbReference type="UniPathway" id="UPA00988"/>
<dbReference type="BioGRID-ORCS" id="54859">
    <property type="hits" value="596 hits in 1167 CRISPR screens"/>
</dbReference>
<dbReference type="ChiTaRS" id="ELP6">
    <property type="organism name" value="human"/>
</dbReference>
<dbReference type="GenomeRNAi" id="54859"/>
<dbReference type="Pharos" id="Q0PNE2">
    <property type="development level" value="Tbio"/>
</dbReference>
<dbReference type="PRO" id="PR:Q0PNE2"/>
<dbReference type="Proteomes" id="UP000005640">
    <property type="component" value="Chromosome 3"/>
</dbReference>
<dbReference type="RNAct" id="Q0PNE2">
    <property type="molecule type" value="protein"/>
</dbReference>
<dbReference type="Bgee" id="ENSG00000163832">
    <property type="expression patterns" value="Expressed in right adrenal gland and 174 other cell types or tissues"/>
</dbReference>
<dbReference type="ExpressionAtlas" id="Q0PNE2">
    <property type="expression patterns" value="baseline and differential"/>
</dbReference>
<dbReference type="GO" id="GO:0005829">
    <property type="term" value="C:cytosol"/>
    <property type="evidence" value="ECO:0000314"/>
    <property type="project" value="FlyBase"/>
</dbReference>
<dbReference type="GO" id="GO:0033588">
    <property type="term" value="C:elongator holoenzyme complex"/>
    <property type="evidence" value="ECO:0000314"/>
    <property type="project" value="UniProtKB"/>
</dbReference>
<dbReference type="GO" id="GO:0005634">
    <property type="term" value="C:nucleus"/>
    <property type="evidence" value="ECO:0000314"/>
    <property type="project" value="FlyBase"/>
</dbReference>
<dbReference type="GO" id="GO:0097352">
    <property type="term" value="P:autophagosome maturation"/>
    <property type="evidence" value="ECO:0007669"/>
    <property type="project" value="Ensembl"/>
</dbReference>
<dbReference type="GO" id="GO:0033554">
    <property type="term" value="P:cellular response to stress"/>
    <property type="evidence" value="ECO:0007669"/>
    <property type="project" value="Ensembl"/>
</dbReference>
<dbReference type="GO" id="GO:0048877">
    <property type="term" value="P:homeostasis of number of retina cells"/>
    <property type="evidence" value="ECO:0007669"/>
    <property type="project" value="Ensembl"/>
</dbReference>
<dbReference type="GO" id="GO:0141084">
    <property type="term" value="P:inflammasome-mediated signaling pathway"/>
    <property type="evidence" value="ECO:0007669"/>
    <property type="project" value="Ensembl"/>
</dbReference>
<dbReference type="GO" id="GO:0007626">
    <property type="term" value="P:locomotory behavior"/>
    <property type="evidence" value="ECO:0007669"/>
    <property type="project" value="Ensembl"/>
</dbReference>
<dbReference type="GO" id="GO:0061744">
    <property type="term" value="P:motor behavior"/>
    <property type="evidence" value="ECO:0007669"/>
    <property type="project" value="Ensembl"/>
</dbReference>
<dbReference type="GO" id="GO:0050885">
    <property type="term" value="P:neuromuscular process controlling balance"/>
    <property type="evidence" value="ECO:0007669"/>
    <property type="project" value="Ensembl"/>
</dbReference>
<dbReference type="GO" id="GO:0051402">
    <property type="term" value="P:neuron apoptotic process"/>
    <property type="evidence" value="ECO:0007669"/>
    <property type="project" value="Ensembl"/>
</dbReference>
<dbReference type="GO" id="GO:0046530">
    <property type="term" value="P:photoreceptor cell differentiation"/>
    <property type="evidence" value="ECO:0007669"/>
    <property type="project" value="Ensembl"/>
</dbReference>
<dbReference type="GO" id="GO:0030335">
    <property type="term" value="P:positive regulation of cell migration"/>
    <property type="evidence" value="ECO:0000250"/>
    <property type="project" value="UniProtKB"/>
</dbReference>
<dbReference type="GO" id="GO:0006457">
    <property type="term" value="P:protein folding"/>
    <property type="evidence" value="ECO:0007669"/>
    <property type="project" value="Ensembl"/>
</dbReference>
<dbReference type="GO" id="GO:0006417">
    <property type="term" value="P:regulation of translation"/>
    <property type="evidence" value="ECO:0000303"/>
    <property type="project" value="ComplexPortal"/>
</dbReference>
<dbReference type="GO" id="GO:0006986">
    <property type="term" value="P:response to unfolded protein"/>
    <property type="evidence" value="ECO:0007669"/>
    <property type="project" value="Ensembl"/>
</dbReference>
<dbReference type="GO" id="GO:0060041">
    <property type="term" value="P:retina development in camera-type eye"/>
    <property type="evidence" value="ECO:0007669"/>
    <property type="project" value="Ensembl"/>
</dbReference>
<dbReference type="GO" id="GO:0006412">
    <property type="term" value="P:translation"/>
    <property type="evidence" value="ECO:0007669"/>
    <property type="project" value="Ensembl"/>
</dbReference>
<dbReference type="GO" id="GO:0002098">
    <property type="term" value="P:tRNA wobble uridine modification"/>
    <property type="evidence" value="ECO:0000303"/>
    <property type="project" value="ComplexPortal"/>
</dbReference>
<dbReference type="GO" id="GO:0010992">
    <property type="term" value="P:ubiquitin recycling"/>
    <property type="evidence" value="ECO:0007669"/>
    <property type="project" value="Ensembl"/>
</dbReference>
<dbReference type="CDD" id="cd19495">
    <property type="entry name" value="Elp6"/>
    <property type="match status" value="1"/>
</dbReference>
<dbReference type="FunFam" id="3.40.50.300:FF:001078">
    <property type="entry name" value="Elongator acetyltransferase complex subunit 6"/>
    <property type="match status" value="1"/>
</dbReference>
<dbReference type="Gene3D" id="3.40.50.300">
    <property type="entry name" value="P-loop containing nucleotide triphosphate hydrolases"/>
    <property type="match status" value="1"/>
</dbReference>
<dbReference type="InterPro" id="IPR018627">
    <property type="entry name" value="ELP6"/>
</dbReference>
<dbReference type="InterPro" id="IPR027417">
    <property type="entry name" value="P-loop_NTPase"/>
</dbReference>
<dbReference type="PANTHER" id="PTHR16184">
    <property type="entry name" value="ELONGATOR COMPLEX PROTEIN 6"/>
    <property type="match status" value="1"/>
</dbReference>
<dbReference type="PANTHER" id="PTHR16184:SF6">
    <property type="entry name" value="ELONGATOR COMPLEX PROTEIN 6"/>
    <property type="match status" value="1"/>
</dbReference>
<dbReference type="Pfam" id="PF09807">
    <property type="entry name" value="ELP6"/>
    <property type="match status" value="1"/>
</dbReference>
<evidence type="ECO:0000250" key="1">
    <source>
        <dbReference type="UniProtKB" id="Q8BK75"/>
    </source>
</evidence>
<evidence type="ECO:0000269" key="2">
    <source>
    </source>
</evidence>
<evidence type="ECO:0000269" key="3">
    <source>
    </source>
</evidence>
<evidence type="ECO:0000303" key="4">
    <source>
    </source>
</evidence>
<evidence type="ECO:0000303" key="5">
    <source>
    </source>
</evidence>
<evidence type="ECO:0000303" key="6">
    <source>
    </source>
</evidence>
<evidence type="ECO:0000305" key="7"/>
<evidence type="ECO:0000305" key="8">
    <source>
    </source>
</evidence>
<evidence type="ECO:0000312" key="9">
    <source>
        <dbReference type="HGNC" id="HGNC:25976"/>
    </source>
</evidence>
<sequence>MFVELNNLLNTTPDRAEQGKLTLLCDAKTDGSFLVHHFLSFYLKANCKVCFVALIQSFSHYSIVGQKLGVSLTMARERGQLVFLEGLKSAVDVVFQAQKEPHPLQFLREANAGNLKPLFEFVREALKPVDSGEARWTYPVLLVDDLSVLLSLGMGAVAVLDFIHYCRATVCWELKGNMVVLVHDSGDAEDEENDILLNGLSHQSHLILRAEGLATGFCRDVHGQLRILWRRPSQPAVHRDQSFTYQYKIQDKSVSFFAKGMSPAVL</sequence>
<proteinExistence type="evidence at protein level"/>
<keyword id="KW-0025">Alternative splicing</keyword>
<keyword id="KW-0963">Cytoplasm</keyword>
<keyword id="KW-0539">Nucleus</keyword>
<keyword id="KW-1267">Proteomics identification</keyword>
<keyword id="KW-1185">Reference proteome</keyword>
<keyword id="KW-0819">tRNA processing</keyword>
<protein>
    <recommendedName>
        <fullName evidence="5">Elongator complex protein 6</fullName>
    </recommendedName>
    <alternativeName>
        <fullName>Angiotonin-transactivated protein 1</fullName>
    </alternativeName>
    <alternativeName>
        <fullName>Protein TMEM103</fullName>
    </alternativeName>
</protein>
<organism>
    <name type="scientific">Homo sapiens</name>
    <name type="common">Human</name>
    <dbReference type="NCBI Taxonomy" id="9606"/>
    <lineage>
        <taxon>Eukaryota</taxon>
        <taxon>Metazoa</taxon>
        <taxon>Chordata</taxon>
        <taxon>Craniata</taxon>
        <taxon>Vertebrata</taxon>
        <taxon>Euteleostomi</taxon>
        <taxon>Mammalia</taxon>
        <taxon>Eutheria</taxon>
        <taxon>Euarchontoglires</taxon>
        <taxon>Primates</taxon>
        <taxon>Haplorrhini</taxon>
        <taxon>Catarrhini</taxon>
        <taxon>Hominidae</taxon>
        <taxon>Homo</taxon>
    </lineage>
</organism>
<reference key="1">
    <citation type="submission" date="2006-06" db="EMBL/GenBank/DDBJ databases">
        <title>Screening the cirrhosis related genes by microarray.</title>
        <authorList>
            <person name="Liu X."/>
            <person name="Wei H."/>
            <person name="Chen J."/>
        </authorList>
    </citation>
    <scope>NUCLEOTIDE SEQUENCE [MRNA] (ISOFORM 1)</scope>
    <source>
        <tissue>Liver</tissue>
    </source>
</reference>
<reference key="2">
    <citation type="journal article" date="2004" name="Nat. Genet.">
        <title>Complete sequencing and characterization of 21,243 full-length human cDNAs.</title>
        <authorList>
            <person name="Ota T."/>
            <person name="Suzuki Y."/>
            <person name="Nishikawa T."/>
            <person name="Otsuki T."/>
            <person name="Sugiyama T."/>
            <person name="Irie R."/>
            <person name="Wakamatsu A."/>
            <person name="Hayashi K."/>
            <person name="Sato H."/>
            <person name="Nagai K."/>
            <person name="Kimura K."/>
            <person name="Makita H."/>
            <person name="Sekine M."/>
            <person name="Obayashi M."/>
            <person name="Nishi T."/>
            <person name="Shibahara T."/>
            <person name="Tanaka T."/>
            <person name="Ishii S."/>
            <person name="Yamamoto J."/>
            <person name="Saito K."/>
            <person name="Kawai Y."/>
            <person name="Isono Y."/>
            <person name="Nakamura Y."/>
            <person name="Nagahari K."/>
            <person name="Murakami K."/>
            <person name="Yasuda T."/>
            <person name="Iwayanagi T."/>
            <person name="Wagatsuma M."/>
            <person name="Shiratori A."/>
            <person name="Sudo H."/>
            <person name="Hosoiri T."/>
            <person name="Kaku Y."/>
            <person name="Kodaira H."/>
            <person name="Kondo H."/>
            <person name="Sugawara M."/>
            <person name="Takahashi M."/>
            <person name="Kanda K."/>
            <person name="Yokoi T."/>
            <person name="Furuya T."/>
            <person name="Kikkawa E."/>
            <person name="Omura Y."/>
            <person name="Abe K."/>
            <person name="Kamihara K."/>
            <person name="Katsuta N."/>
            <person name="Sato K."/>
            <person name="Tanikawa M."/>
            <person name="Yamazaki M."/>
            <person name="Ninomiya K."/>
            <person name="Ishibashi T."/>
            <person name="Yamashita H."/>
            <person name="Murakawa K."/>
            <person name="Fujimori K."/>
            <person name="Tanai H."/>
            <person name="Kimata M."/>
            <person name="Watanabe M."/>
            <person name="Hiraoka S."/>
            <person name="Chiba Y."/>
            <person name="Ishida S."/>
            <person name="Ono Y."/>
            <person name="Takiguchi S."/>
            <person name="Watanabe S."/>
            <person name="Yosida M."/>
            <person name="Hotuta T."/>
            <person name="Kusano J."/>
            <person name="Kanehori K."/>
            <person name="Takahashi-Fujii A."/>
            <person name="Hara H."/>
            <person name="Tanase T.-O."/>
            <person name="Nomura Y."/>
            <person name="Togiya S."/>
            <person name="Komai F."/>
            <person name="Hara R."/>
            <person name="Takeuchi K."/>
            <person name="Arita M."/>
            <person name="Imose N."/>
            <person name="Musashino K."/>
            <person name="Yuuki H."/>
            <person name="Oshima A."/>
            <person name="Sasaki N."/>
            <person name="Aotsuka S."/>
            <person name="Yoshikawa Y."/>
            <person name="Matsunawa H."/>
            <person name="Ichihara T."/>
            <person name="Shiohata N."/>
            <person name="Sano S."/>
            <person name="Moriya S."/>
            <person name="Momiyama H."/>
            <person name="Satoh N."/>
            <person name="Takami S."/>
            <person name="Terashima Y."/>
            <person name="Suzuki O."/>
            <person name="Nakagawa S."/>
            <person name="Senoh A."/>
            <person name="Mizoguchi H."/>
            <person name="Goto Y."/>
            <person name="Shimizu F."/>
            <person name="Wakebe H."/>
            <person name="Hishigaki H."/>
            <person name="Watanabe T."/>
            <person name="Sugiyama A."/>
            <person name="Takemoto M."/>
            <person name="Kawakami B."/>
            <person name="Yamazaki M."/>
            <person name="Watanabe K."/>
            <person name="Kumagai A."/>
            <person name="Itakura S."/>
            <person name="Fukuzumi Y."/>
            <person name="Fujimori Y."/>
            <person name="Komiyama M."/>
            <person name="Tashiro H."/>
            <person name="Tanigami A."/>
            <person name="Fujiwara T."/>
            <person name="Ono T."/>
            <person name="Yamada K."/>
            <person name="Fujii Y."/>
            <person name="Ozaki K."/>
            <person name="Hirao M."/>
            <person name="Ohmori Y."/>
            <person name="Kawabata A."/>
            <person name="Hikiji T."/>
            <person name="Kobatake N."/>
            <person name="Inagaki H."/>
            <person name="Ikema Y."/>
            <person name="Okamoto S."/>
            <person name="Okitani R."/>
            <person name="Kawakami T."/>
            <person name="Noguchi S."/>
            <person name="Itoh T."/>
            <person name="Shigeta K."/>
            <person name="Senba T."/>
            <person name="Matsumura K."/>
            <person name="Nakajima Y."/>
            <person name="Mizuno T."/>
            <person name="Morinaga M."/>
            <person name="Sasaki M."/>
            <person name="Togashi T."/>
            <person name="Oyama M."/>
            <person name="Hata H."/>
            <person name="Watanabe M."/>
            <person name="Komatsu T."/>
            <person name="Mizushima-Sugano J."/>
            <person name="Satoh T."/>
            <person name="Shirai Y."/>
            <person name="Takahashi Y."/>
            <person name="Nakagawa K."/>
            <person name="Okumura K."/>
            <person name="Nagase T."/>
            <person name="Nomura N."/>
            <person name="Kikuchi H."/>
            <person name="Masuho Y."/>
            <person name="Yamashita R."/>
            <person name="Nakai K."/>
            <person name="Yada T."/>
            <person name="Nakamura Y."/>
            <person name="Ohara O."/>
            <person name="Isogai T."/>
            <person name="Sugano S."/>
        </authorList>
    </citation>
    <scope>NUCLEOTIDE SEQUENCE [LARGE SCALE MRNA] (ISOFORM 2)</scope>
    <source>
        <tissue>Colon mucosa</tissue>
    </source>
</reference>
<reference key="3">
    <citation type="journal article" date="2004" name="Genome Res.">
        <title>The status, quality, and expansion of the NIH full-length cDNA project: the Mammalian Gene Collection (MGC).</title>
        <authorList>
            <consortium name="The MGC Project Team"/>
        </authorList>
    </citation>
    <scope>NUCLEOTIDE SEQUENCE [LARGE SCALE MRNA] (ISOFORM 1)</scope>
    <source>
        <tissue>Skin</tissue>
    </source>
</reference>
<reference key="4">
    <citation type="journal article" date="2012" name="J. Biol. Chem.">
        <title>DERP6 (ELP5) and C3ORF75 (ELP6) regulate tumorigenicity and migration of melanoma cells as subunits of Elongator.</title>
        <authorList>
            <person name="Close P."/>
            <person name="Gillard M."/>
            <person name="Ladang A."/>
            <person name="Jiang Z."/>
            <person name="Papuga J."/>
            <person name="Hawkes N."/>
            <person name="Nguyen L."/>
            <person name="Chapelle J.P."/>
            <person name="Bouillenne F."/>
            <person name="Svejstrup J."/>
            <person name="Fillet M."/>
            <person name="Chariot A."/>
        </authorList>
    </citation>
    <scope>IDENTIFICATION IN THE ELONGATOR COMPLEX</scope>
    <scope>FUNCTION</scope>
    <scope>IDENTIFICATION BY MASS SPECTROMETRY</scope>
</reference>
<reference key="5">
    <citation type="journal article" date="2012" name="Proc. Natl. Acad. Sci. U.S.A.">
        <title>N-terminal acetylome analyses and functional insights of the N-terminal acetyltransferase NatB.</title>
        <authorList>
            <person name="Van Damme P."/>
            <person name="Lasa M."/>
            <person name="Polevoda B."/>
            <person name="Gazquez C."/>
            <person name="Elosegui-Artola A."/>
            <person name="Kim D.S."/>
            <person name="De Juan-Pardo E."/>
            <person name="Demeyer K."/>
            <person name="Hole K."/>
            <person name="Larrea E."/>
            <person name="Timmerman E."/>
            <person name="Prieto J."/>
            <person name="Arnesen T."/>
            <person name="Sherman F."/>
            <person name="Gevaert K."/>
            <person name="Aldabe R."/>
        </authorList>
    </citation>
    <scope>IDENTIFICATION BY MASS SPECTROMETRY [LARGE SCALE ANALYSIS]</scope>
</reference>
<reference key="6">
    <citation type="journal article" date="2018" name="Cell. Mol. Life Sci.">
        <title>Structural insights into the function of Elongator.</title>
        <authorList>
            <person name="Dalwadi U."/>
            <person name="Yip C.K."/>
        </authorList>
    </citation>
    <scope>REVIEW</scope>
</reference>
<reference key="7">
    <citation type="journal article" date="2012" name="Open Biol.">
        <title>Drosophila poly suggests a novel role for the Elongator complex in insulin receptor-target of rapamycin signalling.</title>
        <authorList>
            <person name="Bolukbasi E."/>
            <person name="Vass S."/>
            <person name="Cobbe N."/>
            <person name="Nelson B."/>
            <person name="Simossis V."/>
            <person name="Dunbar D.R."/>
            <person name="Heck M.M."/>
        </authorList>
    </citation>
    <scope>SUBCELLULAR LOCATION</scope>
</reference>
<feature type="chain" id="PRO_0000274360" description="Elongator complex protein 6">
    <location>
        <begin position="1"/>
        <end position="266"/>
    </location>
</feature>
<feature type="splice variant" id="VSP_022721" description="In isoform 2." evidence="4">
    <original>LRILWRRPSQPAVHRDQSFTYQYKIQ</original>
    <variation>VCRGLLGNGLLARVPVILDYIGESQA</variation>
    <location>
        <begin position="225"/>
        <end position="250"/>
    </location>
</feature>
<feature type="splice variant" id="VSP_022722" description="In isoform 2." evidence="4">
    <location>
        <begin position="251"/>
        <end position="266"/>
    </location>
</feature>
<accession>Q0PNE2</accession>
<accession>Q9BW57</accession>
<accession>Q9NXJ3</accession>